<feature type="chain" id="PRO_0000446221" description="Carnitine transporter">
    <location>
        <begin position="1"/>
        <end position="550"/>
    </location>
</feature>
<feature type="transmembrane region" description="Helical" evidence="1">
    <location>
        <begin position="15"/>
        <end position="35"/>
    </location>
</feature>
<feature type="transmembrane region" description="Helical" evidence="1">
    <location>
        <begin position="53"/>
        <end position="73"/>
    </location>
</feature>
<feature type="transmembrane region" description="Helical" evidence="1">
    <location>
        <begin position="92"/>
        <end position="112"/>
    </location>
</feature>
<feature type="transmembrane region" description="Helical" evidence="1">
    <location>
        <begin position="137"/>
        <end position="157"/>
    </location>
</feature>
<feature type="transmembrane region" description="Helical" evidence="1">
    <location>
        <begin position="196"/>
        <end position="216"/>
    </location>
</feature>
<feature type="transmembrane region" description="Helical" evidence="1">
    <location>
        <begin position="230"/>
        <end position="250"/>
    </location>
</feature>
<feature type="transmembrane region" description="Helical" evidence="1">
    <location>
        <begin position="263"/>
        <end position="283"/>
    </location>
</feature>
<feature type="transmembrane region" description="Helical" evidence="1">
    <location>
        <begin position="317"/>
        <end position="337"/>
    </location>
</feature>
<feature type="transmembrane region" description="Helical" evidence="1">
    <location>
        <begin position="347"/>
        <end position="367"/>
    </location>
</feature>
<feature type="transmembrane region" description="Helical" evidence="1">
    <location>
        <begin position="401"/>
        <end position="421"/>
    </location>
</feature>
<feature type="transmembrane region" description="Helical" evidence="1">
    <location>
        <begin position="451"/>
        <end position="471"/>
    </location>
</feature>
<feature type="transmembrane region" description="Helical" evidence="1">
    <location>
        <begin position="477"/>
        <end position="497"/>
    </location>
</feature>
<organism>
    <name type="scientific">Acinetobacter baumannii (strain ATCC 19606 / DSM 30007 / JCM 6841 / CCUG 19606 / CIP 70.34 / NBRC 109757 / NCIMB 12457 / NCTC 12156 / 81)</name>
    <dbReference type="NCBI Taxonomy" id="575584"/>
    <lineage>
        <taxon>Bacteria</taxon>
        <taxon>Pseudomonadati</taxon>
        <taxon>Pseudomonadota</taxon>
        <taxon>Gammaproteobacteria</taxon>
        <taxon>Moraxellales</taxon>
        <taxon>Moraxellaceae</taxon>
        <taxon>Acinetobacter</taxon>
        <taxon>Acinetobacter calcoaceticus/baumannii complex</taxon>
    </lineage>
</organism>
<gene>
    <name evidence="4" type="ORF">HMPREF0010_01347</name>
</gene>
<name>CARNT_ACIB2</name>
<keyword id="KW-0997">Cell inner membrane</keyword>
<keyword id="KW-1003">Cell membrane</keyword>
<keyword id="KW-0472">Membrane</keyword>
<keyword id="KW-1185">Reference proteome</keyword>
<keyword id="KW-0812">Transmembrane</keyword>
<keyword id="KW-1133">Transmembrane helix</keyword>
<keyword id="KW-0813">Transport</keyword>
<comment type="function">
    <text evidence="2">Catalyzes the energy-dependent uptake of carnitine and is essential for growth on carnitine. Can also mediate the uptake of choline. Is probably a proton:substrate symporter.</text>
</comment>
<comment type="activity regulation">
    <text evidence="2">Inhibited by the protonophore 3,3',4',5-tetrachlorosalicylanilide (TCS). Not activated by osmolarity.</text>
</comment>
<comment type="subcellular location">
    <subcellularLocation>
        <location evidence="3">Cell inner membrane</location>
        <topology evidence="1">Multi-pass membrane protein</topology>
    </subcellularLocation>
</comment>
<comment type="disruption phenotype">
    <text evidence="2">Deletion of the gene abolishes growth on carnitine as sole carbon and energy source, but does not affect growth on acetate.</text>
</comment>
<comment type="similarity">
    <text evidence="3">Belongs to the BCCT transporter (TC 2.A.15) family.</text>
</comment>
<evidence type="ECO:0000255" key="1"/>
<evidence type="ECO:0000269" key="2">
    <source>
    </source>
</evidence>
<evidence type="ECO:0000305" key="3"/>
<evidence type="ECO:0000312" key="4">
    <source>
        <dbReference type="EMBL" id="EEX03953.1"/>
    </source>
</evidence>
<reference key="1">
    <citation type="journal article" date="2012" name="PLoS ONE">
        <title>The success of Acinetobacter species; genetic, metabolic and virulence attributes.</title>
        <authorList>
            <person name="Peleg A.Y."/>
            <person name="de Breij A."/>
            <person name="Adams M.D."/>
            <person name="Cerqueira G.M."/>
            <person name="Mocali S."/>
            <person name="Galardini M."/>
            <person name="Nibbering P.H."/>
            <person name="Earl A.M."/>
            <person name="Ward D.V."/>
            <person name="Paterson D.L."/>
            <person name="Seifert H."/>
            <person name="Dijkshoorn L."/>
        </authorList>
    </citation>
    <scope>NUCLEOTIDE SEQUENCE [LARGE SCALE GENOMIC DNA]</scope>
    <source>
        <strain>ATCC 19606 / DSM 30007 / JCM 6841 / CCUG 19606 / CIP 70.34 / NBRC 109757 / NCIMB 12457 / NCTC 12156 / 81</strain>
    </source>
</reference>
<reference key="2">
    <citation type="journal article" date="2018" name="MicrobiologyOpen">
        <title>Identification and characterization of a carnitine transporter in Acinetobacter baumannii.</title>
        <authorList>
            <person name="Breisch J."/>
            <person name="Waclawska I."/>
            <person name="Averhoff B."/>
        </authorList>
    </citation>
    <scope>FUNCTION</scope>
    <scope>ACTIVITY REGULATION</scope>
    <scope>DISRUPTION PHENOTYPE</scope>
    <source>
        <strain>ATCC 19606 / DSM 30007 / JCM 6841 / CCUG 19606 / CIP 70.34 / NBRC 109757 / NCIMB 12457 / NCTC 12156 / 81</strain>
    </source>
</reference>
<dbReference type="EMBL" id="GG704573">
    <property type="protein sequence ID" value="EEX03953.1"/>
    <property type="molecule type" value="Genomic_DNA"/>
</dbReference>
<dbReference type="SMR" id="D0C9N4"/>
<dbReference type="BioCyc" id="ABAU575584-HMP:GM69-1362-MONOMER"/>
<dbReference type="Proteomes" id="UP000005740">
    <property type="component" value="Unassembled WGS sequence"/>
</dbReference>
<dbReference type="GO" id="GO:0005886">
    <property type="term" value="C:plasma membrane"/>
    <property type="evidence" value="ECO:0007669"/>
    <property type="project" value="UniProtKB-SubCell"/>
</dbReference>
<dbReference type="GO" id="GO:0022857">
    <property type="term" value="F:transmembrane transporter activity"/>
    <property type="evidence" value="ECO:0007669"/>
    <property type="project" value="InterPro"/>
</dbReference>
<dbReference type="InterPro" id="IPR000060">
    <property type="entry name" value="BCCT_transptr"/>
</dbReference>
<dbReference type="NCBIfam" id="TIGR00842">
    <property type="entry name" value="bcct"/>
    <property type="match status" value="1"/>
</dbReference>
<dbReference type="NCBIfam" id="NF007412">
    <property type="entry name" value="PRK09950.1"/>
    <property type="match status" value="1"/>
</dbReference>
<dbReference type="PANTHER" id="PTHR30047:SF12">
    <property type="entry name" value="BCCT-FAMILY TRANSPORTER"/>
    <property type="match status" value="1"/>
</dbReference>
<dbReference type="PANTHER" id="PTHR30047">
    <property type="entry name" value="HIGH-AFFINITY CHOLINE TRANSPORT PROTEIN-RELATED"/>
    <property type="match status" value="1"/>
</dbReference>
<dbReference type="Pfam" id="PF02028">
    <property type="entry name" value="BCCT"/>
    <property type="match status" value="1"/>
</dbReference>
<proteinExistence type="inferred from homology"/>
<accession>D0C9N4</accession>
<sequence length="550" mass="60971">MDMDNQNTKIYTDKFLAVTSLLFVFISVAGLAIYSQESIKIAATWMQWTTSVFTTPVLLFAFLAIIFTFGLAFSKYGKIKLGEGKPQYSTMSWIFMFILSGIGSSTLYWGFLDWAYYYQTPGLSLPPESAEALKYSVAYSFFHSGLSAWAIYALASISLCYSYHVRKNKGLSLASVIEAVTGFKSTGVVGRLVDLMFLLCMFGALTISLVLTAVTFTNILSQLTGIPNTFMTKVIIILAVSVLFALSSYVGMDKGMQRLSHMVCLGVVLFAIYVLCFGPTQFILNNSLMSFGLMATNFVDMSLFTDPMGDGKFTREWTVFYWLWWISYAPGVALFVTRVSKGRTIKEVIFAMVIGGSVGLWFIFGVFENYSVYSFIHGAVNVPQILSQQGGEVAIGQLLSLLPAGKLMMWIFLGIMVVFLAAHMDAVGYAVSATCTRGLSEGQDPSPNARLFWCVMLTLVPIAMIFSKAPLDTMKTATIVTALPFIVIILIQTYGLVKWLIQDYAKVPSHLIEQQGYDDQEIGLNQTQDEHAKRMQLELASSIKLDRKTS</sequence>
<protein>
    <recommendedName>
        <fullName evidence="3">Carnitine transporter</fullName>
    </recommendedName>
</protein>